<name>OCCM_RHIRD</name>
<geneLocation type="plasmid">
    <name>pTiA6NC</name>
</geneLocation>
<geneLocation type="plasmid">
    <name>pTiB6S3</name>
</geneLocation>
<feature type="chain" id="PRO_0000060128" description="Octopine transport system permease protein OccM">
    <location>
        <begin position="1"/>
        <end position="245"/>
    </location>
</feature>
<feature type="transmembrane region" description="Helical" evidence="2">
    <location>
        <begin position="12"/>
        <end position="32"/>
    </location>
</feature>
<feature type="transmembrane region" description="Helical" evidence="2">
    <location>
        <begin position="57"/>
        <end position="77"/>
    </location>
</feature>
<feature type="transmembrane region" description="Helical" evidence="2">
    <location>
        <begin position="96"/>
        <end position="116"/>
    </location>
</feature>
<feature type="transmembrane region" description="Helical" evidence="2">
    <location>
        <begin position="163"/>
        <end position="183"/>
    </location>
</feature>
<feature type="transmembrane region" description="Helical" evidence="2">
    <location>
        <begin position="204"/>
        <end position="224"/>
    </location>
</feature>
<feature type="domain" description="ABC transmembrane type-1" evidence="2">
    <location>
        <begin position="19"/>
        <end position="216"/>
    </location>
</feature>
<accession>P35114</accession>
<accession>P35115</accession>
<keyword id="KW-0997">Cell inner membrane</keyword>
<keyword id="KW-1003">Cell membrane</keyword>
<keyword id="KW-0472">Membrane</keyword>
<keyword id="KW-0614">Plasmid</keyword>
<keyword id="KW-0812">Transmembrane</keyword>
<keyword id="KW-1133">Transmembrane helix</keyword>
<keyword id="KW-0813">Transport</keyword>
<organism>
    <name type="scientific">Rhizobium radiobacter</name>
    <name type="common">Agrobacterium tumefaciens</name>
    <name type="synonym">Agrobacterium radiobacter</name>
    <dbReference type="NCBI Taxonomy" id="358"/>
    <lineage>
        <taxon>Bacteria</taxon>
        <taxon>Pseudomonadati</taxon>
        <taxon>Pseudomonadota</taxon>
        <taxon>Alphaproteobacteria</taxon>
        <taxon>Hyphomicrobiales</taxon>
        <taxon>Rhizobiaceae</taxon>
        <taxon>Rhizobium/Agrobacterium group</taxon>
        <taxon>Agrobacterium</taxon>
        <taxon>Agrobacterium tumefaciens complex</taxon>
    </lineage>
</organism>
<proteinExistence type="evidence at transcript level"/>
<evidence type="ECO:0000250" key="1"/>
<evidence type="ECO:0000255" key="2">
    <source>
        <dbReference type="PROSITE-ProRule" id="PRU00441"/>
    </source>
</evidence>
<evidence type="ECO:0000305" key="3"/>
<dbReference type="EMBL" id="AF242881">
    <property type="protein sequence ID" value="AAF77142.1"/>
    <property type="molecule type" value="Genomic_DNA"/>
</dbReference>
<dbReference type="EMBL" id="Z30328">
    <property type="protein sequence ID" value="CAA82984.1"/>
    <property type="molecule type" value="Genomic_DNA"/>
</dbReference>
<dbReference type="EMBL" id="M77784">
    <property type="protein sequence ID" value="AAA50515.1"/>
    <property type="molecule type" value="Genomic_DNA"/>
</dbReference>
<dbReference type="PIR" id="B41044">
    <property type="entry name" value="B41044"/>
</dbReference>
<dbReference type="PIR" id="B42600">
    <property type="entry name" value="B42600"/>
</dbReference>
<dbReference type="RefSeq" id="NP_059713.1">
    <property type="nucleotide sequence ID" value="NC_002377.1"/>
</dbReference>
<dbReference type="RefSeq" id="WP_010892401.1">
    <property type="nucleotide sequence ID" value="NZ_QSNU01000012.1"/>
</dbReference>
<dbReference type="SMR" id="P35114"/>
<dbReference type="TCDB" id="3.A.1.3.5">
    <property type="family name" value="the atp-binding cassette (abc) superfamily"/>
</dbReference>
<dbReference type="OrthoDB" id="4404959at2"/>
<dbReference type="GO" id="GO:0043190">
    <property type="term" value="C:ATP-binding cassette (ABC) transporter complex"/>
    <property type="evidence" value="ECO:0007669"/>
    <property type="project" value="InterPro"/>
</dbReference>
<dbReference type="GO" id="GO:0022857">
    <property type="term" value="F:transmembrane transporter activity"/>
    <property type="evidence" value="ECO:0007669"/>
    <property type="project" value="InterPro"/>
</dbReference>
<dbReference type="GO" id="GO:0006865">
    <property type="term" value="P:amino acid transport"/>
    <property type="evidence" value="ECO:0007669"/>
    <property type="project" value="TreeGrafter"/>
</dbReference>
<dbReference type="CDD" id="cd06261">
    <property type="entry name" value="TM_PBP2"/>
    <property type="match status" value="1"/>
</dbReference>
<dbReference type="Gene3D" id="1.10.3720.10">
    <property type="entry name" value="MetI-like"/>
    <property type="match status" value="1"/>
</dbReference>
<dbReference type="InterPro" id="IPR010065">
    <property type="entry name" value="AA_ABC_transptr_permease_3TM"/>
</dbReference>
<dbReference type="InterPro" id="IPR043429">
    <property type="entry name" value="ArtM/GltK/GlnP/TcyL/YhdX-like"/>
</dbReference>
<dbReference type="InterPro" id="IPR000515">
    <property type="entry name" value="MetI-like"/>
</dbReference>
<dbReference type="InterPro" id="IPR035906">
    <property type="entry name" value="MetI-like_sf"/>
</dbReference>
<dbReference type="NCBIfam" id="TIGR01726">
    <property type="entry name" value="HEQRo_perm_3TM"/>
    <property type="match status" value="1"/>
</dbReference>
<dbReference type="PANTHER" id="PTHR30614:SF10">
    <property type="entry name" value="ARGININE ABC TRANSPORTER PERMEASE PROTEIN ARTM"/>
    <property type="match status" value="1"/>
</dbReference>
<dbReference type="PANTHER" id="PTHR30614">
    <property type="entry name" value="MEMBRANE COMPONENT OF AMINO ACID ABC TRANSPORTER"/>
    <property type="match status" value="1"/>
</dbReference>
<dbReference type="Pfam" id="PF00528">
    <property type="entry name" value="BPD_transp_1"/>
    <property type="match status" value="1"/>
</dbReference>
<dbReference type="SUPFAM" id="SSF161098">
    <property type="entry name" value="MetI-like"/>
    <property type="match status" value="1"/>
</dbReference>
<dbReference type="PROSITE" id="PS50928">
    <property type="entry name" value="ABC_TM1"/>
    <property type="match status" value="1"/>
</dbReference>
<protein>
    <recommendedName>
        <fullName>Octopine transport system permease protein OccM</fullName>
    </recommendedName>
</protein>
<sequence>MPFDPAFLWQTFVALLSGIPLALQLAVFSVALGTVLAFGLALMRVSRLWWLDLPARFYIFAFRGTPLLVQIYIIYYGLSQFPDVRHSFIWPFLRDAYWCAMAALALNTAAYTAEIMRGGLLSVPAGQIEAAKACGMGRVKLFRRIVIPQAIRQMLPGYSNEVILMVKSTSLASTITIMEITGIAAKLISESYRTVEVFSCAGAIYLILNFIVARLFTLLEWALWPERRNNRLTTDPVDRKGELHA</sequence>
<comment type="function">
    <text>Component of the octopine active transport system probably consisting of four subunits: Q, M, P and T.</text>
</comment>
<comment type="subcellular location">
    <subcellularLocation>
        <location evidence="1">Cell inner membrane</location>
        <topology evidence="2">Multi-pass membrane protein</topology>
    </subcellularLocation>
</comment>
<comment type="induction">
    <text>By octopine.</text>
</comment>
<comment type="similarity">
    <text evidence="3">Belongs to the binding-protein-dependent transport system permease family. HisMQ subfamily.</text>
</comment>
<gene>
    <name type="primary">occM</name>
</gene>
<reference key="1">
    <citation type="journal article" date="1991" name="J. Bacteriol.">
        <title>Characterization of a putative periplasmic transport system for octopine accumulation encoded by Agrobacterium tumefaciens Ti plasmid pTiA6.</title>
        <authorList>
            <person name="Valdivia R.H."/>
            <person name="Wang L."/>
            <person name="Winans S.C."/>
        </authorList>
    </citation>
    <scope>NUCLEOTIDE SEQUENCE [GENOMIC DNA]</scope>
    <source>
        <plasmid>pTiA6NC</plasmid>
    </source>
</reference>
<reference key="2">
    <citation type="submission" date="2000-03" db="EMBL/GenBank/DDBJ databases">
        <authorList>
            <person name="Zhu J."/>
            <person name="Oger P.M."/>
            <person name="Schrammeijer B."/>
            <person name="Hooykaas P.J."/>
            <person name="Farrand S.K."/>
            <person name="Winans S.C."/>
        </authorList>
    </citation>
    <scope>SEQUENCE REVISION</scope>
</reference>
<reference key="3">
    <citation type="journal article" date="1992" name="J. Bacteriol.">
        <title>Opine transport genes in the octopine (occ) and nopaline (noc) catabolic regions in Ti plasmids of Agrobacterium tumefaciens.</title>
        <authorList>
            <person name="Zanker H."/>
            <person name="von Lintig J."/>
            <person name="Schroeder J."/>
        </authorList>
    </citation>
    <scope>NUCLEOTIDE SEQUENCE [GENOMIC DNA]</scope>
    <source>
        <plasmid>pTiB6S3</plasmid>
    </source>
</reference>